<sequence>MAQQSLIYSFVARGTVILVEFTDFKGNFTSIAAQCLQKLPSSNNKFTYNCDGHTFNYLVEDGFTYCVVAVDSAGRQIPMSFLERVKEDFNKRYGGGKAATAQANSLNKEFGSKLKEHMQYCMDHPDEISKLAKVKAQVSEVKGVMMENIEKVLDRGEKIELLVDKTENLRSQAQDFRTTGTQMRRKMWLQNMKIKLIVLAIIIALILIIVLSVCHGFKC</sequence>
<reference key="1">
    <citation type="submission" date="1997-09" db="EMBL/GenBank/DDBJ databases">
        <authorList>
            <person name="Nikoloff D.M."/>
            <person name="Somerville C.R."/>
        </authorList>
    </citation>
    <scope>NUCLEOTIDE SEQUENCE [MRNA]</scope>
    <source>
        <tissue>Flower</tissue>
        <tissue>Rosette leaf</tissue>
        <tissue>Seedling</tissue>
        <tissue>Silique</tissue>
        <tissue>Stem</tissue>
    </source>
</reference>
<reference key="2">
    <citation type="journal article" date="2000" name="Nature">
        <title>Sequence and analysis of chromosome 1 of the plant Arabidopsis thaliana.</title>
        <authorList>
            <person name="Theologis A."/>
            <person name="Ecker J.R."/>
            <person name="Palm C.J."/>
            <person name="Federspiel N.A."/>
            <person name="Kaul S."/>
            <person name="White O."/>
            <person name="Alonso J."/>
            <person name="Altafi H."/>
            <person name="Araujo R."/>
            <person name="Bowman C.L."/>
            <person name="Brooks S.Y."/>
            <person name="Buehler E."/>
            <person name="Chan A."/>
            <person name="Chao Q."/>
            <person name="Chen H."/>
            <person name="Cheuk R.F."/>
            <person name="Chin C.W."/>
            <person name="Chung M.K."/>
            <person name="Conn L."/>
            <person name="Conway A.B."/>
            <person name="Conway A.R."/>
            <person name="Creasy T.H."/>
            <person name="Dewar K."/>
            <person name="Dunn P."/>
            <person name="Etgu P."/>
            <person name="Feldblyum T.V."/>
            <person name="Feng J.-D."/>
            <person name="Fong B."/>
            <person name="Fujii C.Y."/>
            <person name="Gill J.E."/>
            <person name="Goldsmith A.D."/>
            <person name="Haas B."/>
            <person name="Hansen N.F."/>
            <person name="Hughes B."/>
            <person name="Huizar L."/>
            <person name="Hunter J.L."/>
            <person name="Jenkins J."/>
            <person name="Johnson-Hopson C."/>
            <person name="Khan S."/>
            <person name="Khaykin E."/>
            <person name="Kim C.J."/>
            <person name="Koo H.L."/>
            <person name="Kremenetskaia I."/>
            <person name="Kurtz D.B."/>
            <person name="Kwan A."/>
            <person name="Lam B."/>
            <person name="Langin-Hooper S."/>
            <person name="Lee A."/>
            <person name="Lee J.M."/>
            <person name="Lenz C.A."/>
            <person name="Li J.H."/>
            <person name="Li Y.-P."/>
            <person name="Lin X."/>
            <person name="Liu S.X."/>
            <person name="Liu Z.A."/>
            <person name="Luros J.S."/>
            <person name="Maiti R."/>
            <person name="Marziali A."/>
            <person name="Militscher J."/>
            <person name="Miranda M."/>
            <person name="Nguyen M."/>
            <person name="Nierman W.C."/>
            <person name="Osborne B.I."/>
            <person name="Pai G."/>
            <person name="Peterson J."/>
            <person name="Pham P.K."/>
            <person name="Rizzo M."/>
            <person name="Rooney T."/>
            <person name="Rowley D."/>
            <person name="Sakano H."/>
            <person name="Salzberg S.L."/>
            <person name="Schwartz J.R."/>
            <person name="Shinn P."/>
            <person name="Southwick A.M."/>
            <person name="Sun H."/>
            <person name="Tallon L.J."/>
            <person name="Tambunga G."/>
            <person name="Toriumi M.J."/>
            <person name="Town C.D."/>
            <person name="Utterback T."/>
            <person name="Van Aken S."/>
            <person name="Vaysberg M."/>
            <person name="Vysotskaia V.S."/>
            <person name="Walker M."/>
            <person name="Wu D."/>
            <person name="Yu G."/>
            <person name="Fraser C.M."/>
            <person name="Venter J.C."/>
            <person name="Davis R.W."/>
        </authorList>
    </citation>
    <scope>NUCLEOTIDE SEQUENCE [LARGE SCALE GENOMIC DNA]</scope>
    <source>
        <strain>cv. Columbia</strain>
    </source>
</reference>
<reference key="3">
    <citation type="journal article" date="2017" name="Plant J.">
        <title>Araport11: a complete reannotation of the Arabidopsis thaliana reference genome.</title>
        <authorList>
            <person name="Cheng C.Y."/>
            <person name="Krishnakumar V."/>
            <person name="Chan A.P."/>
            <person name="Thibaud-Nissen F."/>
            <person name="Schobel S."/>
            <person name="Town C.D."/>
        </authorList>
    </citation>
    <scope>GENOME REANNOTATION</scope>
    <source>
        <strain>cv. Columbia</strain>
    </source>
</reference>
<reference key="4">
    <citation type="journal article" date="2003" name="Science">
        <title>Empirical analysis of transcriptional activity in the Arabidopsis genome.</title>
        <authorList>
            <person name="Yamada K."/>
            <person name="Lim J."/>
            <person name="Dale J.M."/>
            <person name="Chen H."/>
            <person name="Shinn P."/>
            <person name="Palm C.J."/>
            <person name="Southwick A.M."/>
            <person name="Wu H.C."/>
            <person name="Kim C.J."/>
            <person name="Nguyen M."/>
            <person name="Pham P.K."/>
            <person name="Cheuk R.F."/>
            <person name="Karlin-Newmann G."/>
            <person name="Liu S.X."/>
            <person name="Lam B."/>
            <person name="Sakano H."/>
            <person name="Wu T."/>
            <person name="Yu G."/>
            <person name="Miranda M."/>
            <person name="Quach H.L."/>
            <person name="Tripp M."/>
            <person name="Chang C.H."/>
            <person name="Lee J.M."/>
            <person name="Toriumi M.J."/>
            <person name="Chan M.M."/>
            <person name="Tang C.C."/>
            <person name="Onodera C.S."/>
            <person name="Deng J.M."/>
            <person name="Akiyama K."/>
            <person name="Ansari Y."/>
            <person name="Arakawa T."/>
            <person name="Banh J."/>
            <person name="Banno F."/>
            <person name="Bowser L."/>
            <person name="Brooks S.Y."/>
            <person name="Carninci P."/>
            <person name="Chao Q."/>
            <person name="Choy N."/>
            <person name="Enju A."/>
            <person name="Goldsmith A.D."/>
            <person name="Gurjal M."/>
            <person name="Hansen N.F."/>
            <person name="Hayashizaki Y."/>
            <person name="Johnson-Hopson C."/>
            <person name="Hsuan V.W."/>
            <person name="Iida K."/>
            <person name="Karnes M."/>
            <person name="Khan S."/>
            <person name="Koesema E."/>
            <person name="Ishida J."/>
            <person name="Jiang P.X."/>
            <person name="Jones T."/>
            <person name="Kawai J."/>
            <person name="Kamiya A."/>
            <person name="Meyers C."/>
            <person name="Nakajima M."/>
            <person name="Narusaka M."/>
            <person name="Seki M."/>
            <person name="Sakurai T."/>
            <person name="Satou M."/>
            <person name="Tamse R."/>
            <person name="Vaysberg M."/>
            <person name="Wallender E.K."/>
            <person name="Wong C."/>
            <person name="Yamamura Y."/>
            <person name="Yuan S."/>
            <person name="Shinozaki K."/>
            <person name="Davis R.W."/>
            <person name="Theologis A."/>
            <person name="Ecker J.R."/>
        </authorList>
    </citation>
    <scope>NUCLEOTIDE SEQUENCE [LARGE SCALE MRNA]</scope>
    <source>
        <strain>cv. Columbia</strain>
    </source>
</reference>
<reference key="5">
    <citation type="journal article" date="2000" name="Plant Physiol.">
        <title>The Arabidopsis genome. An abundance of soluble N-ethylmaleimide-sensitive factor adaptor protein receptors.</title>
        <authorList>
            <person name="Sanderfoot A.A."/>
            <person name="Assaad F.F."/>
            <person name="Raikhel N.V."/>
        </authorList>
    </citation>
    <scope>GENE FAMILY</scope>
    <scope>NOMENCLATURE</scope>
</reference>
<reference key="6">
    <citation type="journal article" date="2004" name="Cell Struct. Funct.">
        <title>Systematic analysis of SNARE molecules in Arabidopsis: dissection of the post-Golgi network in plant cells.</title>
        <authorList>
            <person name="Uemura T."/>
            <person name="Ueda T."/>
            <person name="Ohniwa R.L."/>
            <person name="Nakano A."/>
            <person name="Takeyasu K."/>
            <person name="Sato M.H."/>
        </authorList>
    </citation>
    <scope>TISSUE SPECIFICITY</scope>
    <scope>SUBCELLULAR LOCATION</scope>
</reference>
<name>VA721_ARATH</name>
<protein>
    <recommendedName>
        <fullName evidence="6">Vesicle-associated membrane protein 721</fullName>
        <shortName evidence="6">AtVAMP721</shortName>
    </recommendedName>
    <alternativeName>
        <fullName evidence="7">v-SNARE synaptobrevin 7B</fullName>
        <shortName evidence="7">AtVAMP7B</shortName>
    </alternativeName>
</protein>
<comment type="function">
    <text evidence="9">Involved in the targeting and/or fusion of transport vesicles to their target membrane.</text>
</comment>
<comment type="subcellular location">
    <subcellularLocation>
        <location evidence="5">Cell membrane</location>
        <topology evidence="1">Single-pass type IV membrane protein</topology>
    </subcellularLocation>
    <subcellularLocation>
        <location evidence="5">Early endosome membrane</location>
        <topology evidence="1">Single-pass type IV membrane protein</topology>
    </subcellularLocation>
</comment>
<comment type="alternative products">
    <event type="alternative splicing"/>
    <isoform>
        <id>Q9ZTW3-1</id>
        <name>1</name>
        <sequence type="displayed"/>
    </isoform>
    <text>A number of isoforms are produced. According to EST sequences.</text>
</comment>
<comment type="tissue specificity">
    <text evidence="5">Expressed in flowers, leaves, stems and roots.</text>
</comment>
<comment type="similarity">
    <text evidence="8">Belongs to the synaptobrevin family.</text>
</comment>
<comment type="sequence caution" evidence="8">
    <conflict type="erroneous gene model prediction">
        <sequence resource="EMBL-CDS" id="AAB80624"/>
    </conflict>
</comment>
<comment type="sequence caution" evidence="8">
    <conflict type="erroneous gene model prediction">
        <sequence resource="EMBL-CDS" id="AAF40468"/>
    </conflict>
</comment>
<feature type="chain" id="PRO_0000206754" description="Vesicle-associated membrane protein 721">
    <location>
        <begin position="1"/>
        <end position="219"/>
    </location>
</feature>
<feature type="topological domain" description="Cytoplasmic" evidence="2">
    <location>
        <begin position="1"/>
        <end position="196"/>
    </location>
</feature>
<feature type="transmembrane region" description="Helical; Anchor for type IV membrane protein" evidence="2">
    <location>
        <begin position="197"/>
        <end position="217"/>
    </location>
</feature>
<feature type="topological domain" description="Vesicular" evidence="2">
    <location>
        <begin position="218"/>
        <end position="219"/>
    </location>
</feature>
<feature type="domain" description="Longin" evidence="3">
    <location>
        <begin position="10"/>
        <end position="114"/>
    </location>
</feature>
<feature type="domain" description="v-SNARE coiled-coil homology" evidence="4">
    <location>
        <begin position="130"/>
        <end position="190"/>
    </location>
</feature>
<evidence type="ECO:0000250" key="1">
    <source>
        <dbReference type="UniProtKB" id="Q12255"/>
    </source>
</evidence>
<evidence type="ECO:0000255" key="2"/>
<evidence type="ECO:0000255" key="3">
    <source>
        <dbReference type="PROSITE-ProRule" id="PRU00231"/>
    </source>
</evidence>
<evidence type="ECO:0000255" key="4">
    <source>
        <dbReference type="PROSITE-ProRule" id="PRU00290"/>
    </source>
</evidence>
<evidence type="ECO:0000269" key="5">
    <source>
    </source>
</evidence>
<evidence type="ECO:0000303" key="6">
    <source>
    </source>
</evidence>
<evidence type="ECO:0000303" key="7">
    <source ref="1"/>
</evidence>
<evidence type="ECO:0000305" key="8"/>
<evidence type="ECO:0000305" key="9">
    <source>
    </source>
</evidence>
<evidence type="ECO:0000312" key="10">
    <source>
        <dbReference type="Araport" id="AT1G04750"/>
    </source>
</evidence>
<evidence type="ECO:0000312" key="11">
    <source>
        <dbReference type="EMBL" id="AAB80624.1"/>
    </source>
</evidence>
<evidence type="ECO:0000312" key="12">
    <source>
        <dbReference type="EMBL" id="AAF40468.1"/>
    </source>
</evidence>
<accession>Q9ZTW3</accession>
<accession>O23011</accession>
<accession>Q9MAS4</accession>
<gene>
    <name evidence="6" type="primary">VAMP721</name>
    <name evidence="7" type="synonym">VAMP7B</name>
    <name evidence="10" type="ordered locus">At1g04750</name>
    <name evidence="12" type="ORF">F13M7.26</name>
    <name type="ORF">F13M7_23</name>
    <name evidence="11" type="ORF">T1G11.1</name>
</gene>
<dbReference type="EMBL" id="AF025333">
    <property type="protein sequence ID" value="AAC98905.1"/>
    <property type="molecule type" value="mRNA"/>
</dbReference>
<dbReference type="EMBL" id="AC002376">
    <property type="protein sequence ID" value="AAB80624.1"/>
    <property type="status" value="ALT_SEQ"/>
    <property type="molecule type" value="Genomic_DNA"/>
</dbReference>
<dbReference type="EMBL" id="AC004809">
    <property type="protein sequence ID" value="AAF40468.1"/>
    <property type="status" value="ALT_SEQ"/>
    <property type="molecule type" value="Genomic_DNA"/>
</dbReference>
<dbReference type="EMBL" id="CP002684">
    <property type="protein sequence ID" value="AEE27738.1"/>
    <property type="molecule type" value="Genomic_DNA"/>
</dbReference>
<dbReference type="EMBL" id="AY079164">
    <property type="protein sequence ID" value="AAL85003.1"/>
    <property type="molecule type" value="mRNA"/>
</dbReference>
<dbReference type="EMBL" id="AY133661">
    <property type="protein sequence ID" value="AAM91491.1"/>
    <property type="molecule type" value="mRNA"/>
</dbReference>
<dbReference type="PIR" id="D86180">
    <property type="entry name" value="D86180"/>
</dbReference>
<dbReference type="PIR" id="E86180">
    <property type="entry name" value="E86180"/>
</dbReference>
<dbReference type="RefSeq" id="NP_171967.1">
    <molecule id="Q9ZTW3-1"/>
    <property type="nucleotide sequence ID" value="NM_100353.4"/>
</dbReference>
<dbReference type="SMR" id="Q9ZTW3"/>
<dbReference type="BioGRID" id="24654">
    <property type="interactions" value="18"/>
</dbReference>
<dbReference type="FunCoup" id="Q9ZTW3">
    <property type="interactions" value="1060"/>
</dbReference>
<dbReference type="IntAct" id="Q9ZTW3">
    <property type="interactions" value="7"/>
</dbReference>
<dbReference type="STRING" id="3702.Q9ZTW3"/>
<dbReference type="iPTMnet" id="Q9ZTW3"/>
<dbReference type="PaxDb" id="3702-AT1G04750.1"/>
<dbReference type="ProteomicsDB" id="243253">
    <molecule id="Q9ZTW3-1"/>
</dbReference>
<dbReference type="EnsemblPlants" id="AT1G04750.1">
    <molecule id="Q9ZTW3-1"/>
    <property type="protein sequence ID" value="AT1G04750.1"/>
    <property type="gene ID" value="AT1G04750"/>
</dbReference>
<dbReference type="GeneID" id="839419"/>
<dbReference type="Gramene" id="AT1G04750.1">
    <molecule id="Q9ZTW3-1"/>
    <property type="protein sequence ID" value="AT1G04750.1"/>
    <property type="gene ID" value="AT1G04750"/>
</dbReference>
<dbReference type="KEGG" id="ath:AT1G04750"/>
<dbReference type="Araport" id="AT1G04750"/>
<dbReference type="TAIR" id="AT1G04750">
    <property type="gene designation" value="VAMP721"/>
</dbReference>
<dbReference type="eggNOG" id="KOG0859">
    <property type="taxonomic scope" value="Eukaryota"/>
</dbReference>
<dbReference type="HOGENOM" id="CLU_064620_1_0_1"/>
<dbReference type="InParanoid" id="Q9ZTW3"/>
<dbReference type="OMA" id="TSIANQC"/>
<dbReference type="OrthoDB" id="248747at2759"/>
<dbReference type="PhylomeDB" id="Q9ZTW3"/>
<dbReference type="PRO" id="PR:Q9ZTW3"/>
<dbReference type="Proteomes" id="UP000006548">
    <property type="component" value="Chromosome 1"/>
</dbReference>
<dbReference type="ExpressionAtlas" id="Q9ZTW3">
    <property type="expression patterns" value="baseline and differential"/>
</dbReference>
<dbReference type="GO" id="GO:0009504">
    <property type="term" value="C:cell plate"/>
    <property type="evidence" value="ECO:0000314"/>
    <property type="project" value="TAIR"/>
</dbReference>
<dbReference type="GO" id="GO:0031901">
    <property type="term" value="C:early endosome membrane"/>
    <property type="evidence" value="ECO:0007669"/>
    <property type="project" value="UniProtKB-SubCell"/>
</dbReference>
<dbReference type="GO" id="GO:0005768">
    <property type="term" value="C:endosome"/>
    <property type="evidence" value="ECO:0000314"/>
    <property type="project" value="TAIR"/>
</dbReference>
<dbReference type="GO" id="GO:0005886">
    <property type="term" value="C:plasma membrane"/>
    <property type="evidence" value="ECO:0007005"/>
    <property type="project" value="TAIR"/>
</dbReference>
<dbReference type="GO" id="GO:0009506">
    <property type="term" value="C:plasmodesma"/>
    <property type="evidence" value="ECO:0007005"/>
    <property type="project" value="TAIR"/>
</dbReference>
<dbReference type="GO" id="GO:0009920">
    <property type="term" value="P:cell plate formation involved in plant-type cell wall biogenesis"/>
    <property type="evidence" value="ECO:0000316"/>
    <property type="project" value="TAIR"/>
</dbReference>
<dbReference type="GO" id="GO:0072659">
    <property type="term" value="P:protein localization to plasma membrane"/>
    <property type="evidence" value="ECO:0000316"/>
    <property type="project" value="TAIR"/>
</dbReference>
<dbReference type="GO" id="GO:0015031">
    <property type="term" value="P:protein transport"/>
    <property type="evidence" value="ECO:0007669"/>
    <property type="project" value="UniProtKB-KW"/>
</dbReference>
<dbReference type="GO" id="GO:0034976">
    <property type="term" value="P:response to endoplasmic reticulum stress"/>
    <property type="evidence" value="ECO:0000353"/>
    <property type="project" value="TAIR"/>
</dbReference>
<dbReference type="GO" id="GO:0016192">
    <property type="term" value="P:vesicle-mediated transport"/>
    <property type="evidence" value="ECO:0007669"/>
    <property type="project" value="InterPro"/>
</dbReference>
<dbReference type="CDD" id="cd14824">
    <property type="entry name" value="Longin"/>
    <property type="match status" value="1"/>
</dbReference>
<dbReference type="CDD" id="cd15843">
    <property type="entry name" value="R-SNARE"/>
    <property type="match status" value="1"/>
</dbReference>
<dbReference type="FunFam" id="3.30.450.50:FF:000002">
    <property type="entry name" value="Vesicle-associated membrane protein 722"/>
    <property type="match status" value="1"/>
</dbReference>
<dbReference type="FunFam" id="1.20.5.110:FF:000010">
    <property type="entry name" value="Vesicle-associated membrane protein 726"/>
    <property type="match status" value="1"/>
</dbReference>
<dbReference type="Gene3D" id="1.20.5.110">
    <property type="match status" value="1"/>
</dbReference>
<dbReference type="Gene3D" id="3.30.450.50">
    <property type="entry name" value="Longin domain"/>
    <property type="match status" value="1"/>
</dbReference>
<dbReference type="InterPro" id="IPR011012">
    <property type="entry name" value="Longin-like_dom_sf"/>
</dbReference>
<dbReference type="InterPro" id="IPR010908">
    <property type="entry name" value="Longin_dom"/>
</dbReference>
<dbReference type="InterPro" id="IPR001388">
    <property type="entry name" value="Synaptobrevin-like"/>
</dbReference>
<dbReference type="InterPro" id="IPR051097">
    <property type="entry name" value="Synaptobrevin-like_transport"/>
</dbReference>
<dbReference type="InterPro" id="IPR042855">
    <property type="entry name" value="V_SNARE_CC"/>
</dbReference>
<dbReference type="PANTHER" id="PTHR21136">
    <property type="entry name" value="SNARE PROTEINS"/>
    <property type="match status" value="1"/>
</dbReference>
<dbReference type="PANTHER" id="PTHR21136:SF176">
    <property type="entry name" value="VESICLE-ASSOCIATED MEMBRANE PROTEIN 721"/>
    <property type="match status" value="1"/>
</dbReference>
<dbReference type="Pfam" id="PF13774">
    <property type="entry name" value="Longin"/>
    <property type="match status" value="1"/>
</dbReference>
<dbReference type="Pfam" id="PF00957">
    <property type="entry name" value="Synaptobrevin"/>
    <property type="match status" value="1"/>
</dbReference>
<dbReference type="PRINTS" id="PR00219">
    <property type="entry name" value="SYNAPTOBREVN"/>
</dbReference>
<dbReference type="SMART" id="SM01270">
    <property type="entry name" value="Longin"/>
    <property type="match status" value="1"/>
</dbReference>
<dbReference type="SUPFAM" id="SSF58038">
    <property type="entry name" value="SNARE fusion complex"/>
    <property type="match status" value="1"/>
</dbReference>
<dbReference type="SUPFAM" id="SSF64356">
    <property type="entry name" value="SNARE-like"/>
    <property type="match status" value="1"/>
</dbReference>
<dbReference type="PROSITE" id="PS50859">
    <property type="entry name" value="LONGIN"/>
    <property type="match status" value="1"/>
</dbReference>
<dbReference type="PROSITE" id="PS00417">
    <property type="entry name" value="SYNAPTOBREVIN"/>
    <property type="match status" value="1"/>
</dbReference>
<dbReference type="PROSITE" id="PS50892">
    <property type="entry name" value="V_SNARE"/>
    <property type="match status" value="1"/>
</dbReference>
<proteinExistence type="evidence at transcript level"/>
<organism>
    <name type="scientific">Arabidopsis thaliana</name>
    <name type="common">Mouse-ear cress</name>
    <dbReference type="NCBI Taxonomy" id="3702"/>
    <lineage>
        <taxon>Eukaryota</taxon>
        <taxon>Viridiplantae</taxon>
        <taxon>Streptophyta</taxon>
        <taxon>Embryophyta</taxon>
        <taxon>Tracheophyta</taxon>
        <taxon>Spermatophyta</taxon>
        <taxon>Magnoliopsida</taxon>
        <taxon>eudicotyledons</taxon>
        <taxon>Gunneridae</taxon>
        <taxon>Pentapetalae</taxon>
        <taxon>rosids</taxon>
        <taxon>malvids</taxon>
        <taxon>Brassicales</taxon>
        <taxon>Brassicaceae</taxon>
        <taxon>Camelineae</taxon>
        <taxon>Arabidopsis</taxon>
    </lineage>
</organism>
<keyword id="KW-0025">Alternative splicing</keyword>
<keyword id="KW-1003">Cell membrane</keyword>
<keyword id="KW-0175">Coiled coil</keyword>
<keyword id="KW-0967">Endosome</keyword>
<keyword id="KW-0472">Membrane</keyword>
<keyword id="KW-0653">Protein transport</keyword>
<keyword id="KW-1185">Reference proteome</keyword>
<keyword id="KW-0812">Transmembrane</keyword>
<keyword id="KW-1133">Transmembrane helix</keyword>
<keyword id="KW-0813">Transport</keyword>